<sequence>MARALMLRKLDLAGATKAQCFTKLPWAYSTRWFSSRMGLGIRHSHTAVVLVIYVSTIIKPIHVYCTLYYAILRCCIQIYIFFFSFHVVFKRALLLRLRYAFSCTAREKKNEMFSF</sequence>
<protein>
    <recommendedName>
        <fullName>Putative uncharacterized protein YCL023C</fullName>
    </recommendedName>
</protein>
<organism>
    <name type="scientific">Saccharomyces cerevisiae (strain ATCC 204508 / S288c)</name>
    <name type="common">Baker's yeast</name>
    <dbReference type="NCBI Taxonomy" id="559292"/>
    <lineage>
        <taxon>Eukaryota</taxon>
        <taxon>Fungi</taxon>
        <taxon>Dikarya</taxon>
        <taxon>Ascomycota</taxon>
        <taxon>Saccharomycotina</taxon>
        <taxon>Saccharomycetes</taxon>
        <taxon>Saccharomycetales</taxon>
        <taxon>Saccharomycetaceae</taxon>
        <taxon>Saccharomyces</taxon>
    </lineage>
</organism>
<dbReference type="EMBL" id="X59720">
    <property type="protein sequence ID" value="CAA42362.1"/>
    <property type="molecule type" value="Genomic_DNA"/>
</dbReference>
<dbReference type="PIR" id="S19350">
    <property type="entry name" value="S19350"/>
</dbReference>
<dbReference type="DIP" id="DIP-4551N"/>
<dbReference type="STRING" id="4932.YCL023C"/>
<dbReference type="PaxDb" id="4932-YCL023C"/>
<dbReference type="EnsemblFungi" id="YCL023C_mRNA">
    <property type="protein sequence ID" value="YCL023C"/>
    <property type="gene ID" value="YCL023C"/>
</dbReference>
<dbReference type="AGR" id="SGD:S000000528"/>
<dbReference type="SGD" id="S000000528">
    <property type="gene designation" value="YCL023C"/>
</dbReference>
<dbReference type="HOGENOM" id="CLU_2110839_0_0_1"/>
<comment type="miscellaneous">
    <text evidence="1">Partially overlaps KCC4.</text>
</comment>
<comment type="caution">
    <text evidence="2">Product of a dubious gene prediction unlikely to encode a functional protein. Because of that it is not part of the S.cerevisiae S288c complete/reference proteome set.</text>
</comment>
<gene>
    <name type="ordered locus">YCL023C</name>
    <name type="ORF">YCL23C</name>
</gene>
<name>YCC3_YEAST</name>
<evidence type="ECO:0000305" key="1"/>
<evidence type="ECO:0000305" key="2">
    <source>
    </source>
</evidence>
<reference key="1">
    <citation type="journal article" date="1992" name="Nature">
        <title>The complete DNA sequence of yeast chromosome III.</title>
        <authorList>
            <person name="Oliver S.G."/>
            <person name="van der Aart Q.J.M."/>
            <person name="Agostoni-Carbone M.L."/>
            <person name="Aigle M."/>
            <person name="Alberghina L."/>
            <person name="Alexandraki D."/>
            <person name="Antoine G."/>
            <person name="Anwar R."/>
            <person name="Ballesta J.P.G."/>
            <person name="Benit P."/>
            <person name="Berben G."/>
            <person name="Bergantino E."/>
            <person name="Biteau N."/>
            <person name="Bolle P.-A."/>
            <person name="Bolotin-Fukuhara M."/>
            <person name="Brown A."/>
            <person name="Brown A.J.P."/>
            <person name="Buhler J.-M."/>
            <person name="Carcano C."/>
            <person name="Carignani G."/>
            <person name="Cederberg H."/>
            <person name="Chanet R."/>
            <person name="Contreras R."/>
            <person name="Crouzet M."/>
            <person name="Daignan-Fornier B."/>
            <person name="Defoor E."/>
            <person name="Delgado M.D."/>
            <person name="Demolder J."/>
            <person name="Doira C."/>
            <person name="Dubois E."/>
            <person name="Dujon B."/>
            <person name="Duesterhoeft A."/>
            <person name="Erdmann D."/>
            <person name="Esteban M."/>
            <person name="Fabre F."/>
            <person name="Fairhead C."/>
            <person name="Faye G."/>
            <person name="Feldmann H."/>
            <person name="Fiers W."/>
            <person name="Francingues-Gaillard M.-C."/>
            <person name="Franco L."/>
            <person name="Frontali L."/>
            <person name="Fukuhara H."/>
            <person name="Fuller L.J."/>
            <person name="Galland P."/>
            <person name="Gent M.E."/>
            <person name="Gigot D."/>
            <person name="Gilliquet V."/>
            <person name="Glansdorff N."/>
            <person name="Goffeau A."/>
            <person name="Grenson M."/>
            <person name="Grisanti P."/>
            <person name="Grivell L.A."/>
            <person name="de Haan M."/>
            <person name="Haasemann M."/>
            <person name="Hatat D."/>
            <person name="Hoenicka J."/>
            <person name="Hegemann J.H."/>
            <person name="Herbert C.J."/>
            <person name="Hilger F."/>
            <person name="Hohmann S."/>
            <person name="Hollenberg C.P."/>
            <person name="Huse K."/>
            <person name="Iborra F."/>
            <person name="Indge K.J."/>
            <person name="Isono K."/>
            <person name="Jacq C."/>
            <person name="Jacquet M."/>
            <person name="James C.M."/>
            <person name="Jauniaux J.-C."/>
            <person name="Jia Y."/>
            <person name="Jimenez A."/>
            <person name="Kelly A."/>
            <person name="Kleinhans U."/>
            <person name="Kreisl P."/>
            <person name="Lanfranchi G."/>
            <person name="Lewis C."/>
            <person name="van der Linden C.G."/>
            <person name="Lucchini G."/>
            <person name="Lutzenkirchen K."/>
            <person name="Maat M.J."/>
            <person name="Mallet L."/>
            <person name="Mannhaupt G."/>
            <person name="Martegani E."/>
            <person name="Mathieu A."/>
            <person name="Maurer C.T.C."/>
            <person name="McConnell D."/>
            <person name="McKee R.A."/>
            <person name="Messenguy F."/>
            <person name="Mewes H.-W."/>
            <person name="Molemans F."/>
            <person name="Montague M.A."/>
            <person name="Muzi Falconi M."/>
            <person name="Navas L."/>
            <person name="Newlon C.S."/>
            <person name="Noone D."/>
            <person name="Pallier C."/>
            <person name="Panzeri L."/>
            <person name="Pearson B.M."/>
            <person name="Perea J."/>
            <person name="Philippsen P."/>
            <person name="Pierard A."/>
            <person name="Planta R.J."/>
            <person name="Plevani P."/>
            <person name="Poetsch B."/>
            <person name="Pohl F.M."/>
            <person name="Purnelle B."/>
            <person name="Ramezani Rad M."/>
            <person name="Rasmussen S.W."/>
            <person name="Raynal A."/>
            <person name="Remacha M.A."/>
            <person name="Richterich P."/>
            <person name="Roberts A.B."/>
            <person name="Rodriguez F."/>
            <person name="Sanz E."/>
            <person name="Schaaff-Gerstenschlaeger I."/>
            <person name="Scherens B."/>
            <person name="Schweitzer B."/>
            <person name="Shu Y."/>
            <person name="Skala J."/>
            <person name="Slonimski P.P."/>
            <person name="Sor F."/>
            <person name="Soustelle C."/>
            <person name="Spiegelberg R."/>
            <person name="Stateva L.I."/>
            <person name="Steensma H.Y."/>
            <person name="Steiner S."/>
            <person name="Thierry A."/>
            <person name="Thireos G."/>
            <person name="Tzermia M."/>
            <person name="Urrestarazu L.A."/>
            <person name="Valle G."/>
            <person name="Vetter I."/>
            <person name="van Vliet-Reedijk J.C."/>
            <person name="Voet M."/>
            <person name="Volckaert G."/>
            <person name="Vreken P."/>
            <person name="Wang H."/>
            <person name="Warmington J.R."/>
            <person name="von Wettstein D."/>
            <person name="Wicksteed B.L."/>
            <person name="Wilson C."/>
            <person name="Wurst H."/>
            <person name="Xu G."/>
            <person name="Yoshikawa A."/>
            <person name="Zimmermann F.K."/>
            <person name="Sgouros J.G."/>
        </authorList>
    </citation>
    <scope>NUCLEOTIDE SEQUENCE [LARGE SCALE GENOMIC DNA]</scope>
    <source>
        <strain>ATCC 204508 / S288c</strain>
    </source>
</reference>
<reference key="2">
    <citation type="journal article" date="2014" name="G3 (Bethesda)">
        <title>The reference genome sequence of Saccharomyces cerevisiae: Then and now.</title>
        <authorList>
            <person name="Engel S.R."/>
            <person name="Dietrich F.S."/>
            <person name="Fisk D.G."/>
            <person name="Binkley G."/>
            <person name="Balakrishnan R."/>
            <person name="Costanzo M.C."/>
            <person name="Dwight S.S."/>
            <person name="Hitz B.C."/>
            <person name="Karra K."/>
            <person name="Nash R.S."/>
            <person name="Weng S."/>
            <person name="Wong E.D."/>
            <person name="Lloyd P."/>
            <person name="Skrzypek M.S."/>
            <person name="Miyasato S.R."/>
            <person name="Simison M."/>
            <person name="Cherry J.M."/>
        </authorList>
    </citation>
    <scope>GENOME REANNOTATION</scope>
    <source>
        <strain>ATCC 204508 / S288c</strain>
    </source>
</reference>
<proteinExistence type="uncertain"/>
<feature type="chain" id="PRO_0000202542" description="Putative uncharacterized protein YCL023C">
    <location>
        <begin position="1"/>
        <end position="115"/>
    </location>
</feature>
<accession>P25563</accession>